<evidence type="ECO:0000255" key="1">
    <source>
        <dbReference type="HAMAP-Rule" id="MF_00128"/>
    </source>
</evidence>
<gene>
    <name evidence="1" type="primary">nrdI</name>
    <name type="ordered locus">EcHS_A2810</name>
</gene>
<accession>A8A3F6</accession>
<comment type="function">
    <text evidence="1">Probably involved in ribonucleotide reductase function.</text>
</comment>
<comment type="similarity">
    <text evidence="1">Belongs to the NrdI family.</text>
</comment>
<name>NRDI_ECOHS</name>
<proteinExistence type="inferred from homology"/>
<protein>
    <recommendedName>
        <fullName evidence="1">Protein NrdI</fullName>
    </recommendedName>
</protein>
<reference key="1">
    <citation type="journal article" date="2008" name="J. Bacteriol.">
        <title>The pangenome structure of Escherichia coli: comparative genomic analysis of E. coli commensal and pathogenic isolates.</title>
        <authorList>
            <person name="Rasko D.A."/>
            <person name="Rosovitz M.J."/>
            <person name="Myers G.S.A."/>
            <person name="Mongodin E.F."/>
            <person name="Fricke W.F."/>
            <person name="Gajer P."/>
            <person name="Crabtree J."/>
            <person name="Sebaihia M."/>
            <person name="Thomson N.R."/>
            <person name="Chaudhuri R."/>
            <person name="Henderson I.R."/>
            <person name="Sperandio V."/>
            <person name="Ravel J."/>
        </authorList>
    </citation>
    <scope>NUCLEOTIDE SEQUENCE [LARGE SCALE GENOMIC DNA]</scope>
    <source>
        <strain>HS</strain>
    </source>
</reference>
<sequence length="136" mass="15340">MSQLVYFSSSSENTQRFIERLGLPAVRIPLNERERIQVDEPYILIVPSYGGGGTAGAVPRQVIRFLNDEHNRALLRGVIASGNRNFGEAYGRAGDVIARKCGVPWLYRFELMGTQSDIENVRKGVTEFWQRQPQNA</sequence>
<organism>
    <name type="scientific">Escherichia coli O9:H4 (strain HS)</name>
    <dbReference type="NCBI Taxonomy" id="331112"/>
    <lineage>
        <taxon>Bacteria</taxon>
        <taxon>Pseudomonadati</taxon>
        <taxon>Pseudomonadota</taxon>
        <taxon>Gammaproteobacteria</taxon>
        <taxon>Enterobacterales</taxon>
        <taxon>Enterobacteriaceae</taxon>
        <taxon>Escherichia</taxon>
    </lineage>
</organism>
<dbReference type="EMBL" id="CP000802">
    <property type="protein sequence ID" value="ABV07060.1"/>
    <property type="molecule type" value="Genomic_DNA"/>
</dbReference>
<dbReference type="RefSeq" id="WP_000080947.1">
    <property type="nucleotide sequence ID" value="NC_009800.1"/>
</dbReference>
<dbReference type="SMR" id="A8A3F6"/>
<dbReference type="GeneID" id="75172757"/>
<dbReference type="KEGG" id="ecx:EcHS_A2810"/>
<dbReference type="HOGENOM" id="CLU_114845_0_0_6"/>
<dbReference type="GO" id="GO:0010181">
    <property type="term" value="F:FMN binding"/>
    <property type="evidence" value="ECO:0007669"/>
    <property type="project" value="InterPro"/>
</dbReference>
<dbReference type="GO" id="GO:0036211">
    <property type="term" value="P:protein modification process"/>
    <property type="evidence" value="ECO:0007669"/>
    <property type="project" value="InterPro"/>
</dbReference>
<dbReference type="FunFam" id="3.40.50.360:FF:000005">
    <property type="entry name" value="Protein NrdI"/>
    <property type="match status" value="1"/>
</dbReference>
<dbReference type="Gene3D" id="3.40.50.360">
    <property type="match status" value="1"/>
</dbReference>
<dbReference type="HAMAP" id="MF_00128">
    <property type="entry name" value="NrdI"/>
    <property type="match status" value="1"/>
</dbReference>
<dbReference type="InterPro" id="IPR029039">
    <property type="entry name" value="Flavoprotein-like_sf"/>
</dbReference>
<dbReference type="InterPro" id="IPR020852">
    <property type="entry name" value="RNR_Ib_NrdI_bac"/>
</dbReference>
<dbReference type="InterPro" id="IPR004465">
    <property type="entry name" value="RNR_NrdI"/>
</dbReference>
<dbReference type="NCBIfam" id="TIGR00333">
    <property type="entry name" value="nrdI"/>
    <property type="match status" value="1"/>
</dbReference>
<dbReference type="PANTHER" id="PTHR37297">
    <property type="entry name" value="PROTEIN NRDI"/>
    <property type="match status" value="1"/>
</dbReference>
<dbReference type="PANTHER" id="PTHR37297:SF1">
    <property type="entry name" value="PROTEIN NRDI"/>
    <property type="match status" value="1"/>
</dbReference>
<dbReference type="Pfam" id="PF07972">
    <property type="entry name" value="Flavodoxin_NdrI"/>
    <property type="match status" value="1"/>
</dbReference>
<dbReference type="PIRSF" id="PIRSF005087">
    <property type="entry name" value="NrdI"/>
    <property type="match status" value="1"/>
</dbReference>
<dbReference type="SUPFAM" id="SSF52218">
    <property type="entry name" value="Flavoproteins"/>
    <property type="match status" value="1"/>
</dbReference>
<feature type="chain" id="PRO_1000057835" description="Protein NrdI">
    <location>
        <begin position="1"/>
        <end position="136"/>
    </location>
</feature>